<proteinExistence type="inferred from homology"/>
<feature type="chain" id="PRO_0000223237" description="HTH-type transcriptional regulator RipA">
    <location>
        <begin position="1"/>
        <end position="335"/>
    </location>
</feature>
<feature type="domain" description="HTH araC/xylS-type" evidence="2">
    <location>
        <begin position="119"/>
        <end position="216"/>
    </location>
</feature>
<feature type="DNA-binding region" description="H-T-H motif" evidence="2">
    <location>
        <begin position="136"/>
        <end position="157"/>
    </location>
</feature>
<feature type="DNA-binding region" description="H-T-H motif" evidence="2">
    <location>
        <begin position="183"/>
        <end position="206"/>
    </location>
</feature>
<protein>
    <recommendedName>
        <fullName evidence="1">HTH-type transcriptional regulator RipA</fullName>
    </recommendedName>
    <alternativeName>
        <fullName evidence="1">Repressor of iron proteins A</fullName>
        <shortName evidence="1">RIPA</shortName>
    </alternativeName>
</protein>
<accession>Q6NI56</accession>
<gene>
    <name evidence="1" type="primary">ripA</name>
    <name type="ordered locus">DIP0922</name>
</gene>
<keyword id="KW-0238">DNA-binding</keyword>
<keyword id="KW-1185">Reference proteome</keyword>
<keyword id="KW-0678">Repressor</keyword>
<keyword id="KW-0804">Transcription</keyword>
<keyword id="KW-0805">Transcription regulation</keyword>
<dbReference type="EMBL" id="BX248356">
    <property type="protein sequence ID" value="CAE49439.1"/>
    <property type="molecule type" value="Genomic_DNA"/>
</dbReference>
<dbReference type="RefSeq" id="WP_010934672.1">
    <property type="nucleotide sequence ID" value="NC_002935.2"/>
</dbReference>
<dbReference type="SMR" id="Q6NI56"/>
<dbReference type="STRING" id="257309.DIP0922"/>
<dbReference type="DNASU" id="2649962"/>
<dbReference type="KEGG" id="cdi:DIP0922"/>
<dbReference type="HOGENOM" id="CLU_810658_0_0_11"/>
<dbReference type="Proteomes" id="UP000002198">
    <property type="component" value="Chromosome"/>
</dbReference>
<dbReference type="GO" id="GO:0003700">
    <property type="term" value="F:DNA-binding transcription factor activity"/>
    <property type="evidence" value="ECO:0007669"/>
    <property type="project" value="InterPro"/>
</dbReference>
<dbReference type="GO" id="GO:0043565">
    <property type="term" value="F:sequence-specific DNA binding"/>
    <property type="evidence" value="ECO:0007669"/>
    <property type="project" value="InterPro"/>
</dbReference>
<dbReference type="GO" id="GO:0006355">
    <property type="term" value="P:regulation of DNA-templated transcription"/>
    <property type="evidence" value="ECO:0000250"/>
    <property type="project" value="UniProtKB"/>
</dbReference>
<dbReference type="Gene3D" id="1.10.10.60">
    <property type="entry name" value="Homeodomain-like"/>
    <property type="match status" value="1"/>
</dbReference>
<dbReference type="InterPro" id="IPR009057">
    <property type="entry name" value="Homeodomain-like_sf"/>
</dbReference>
<dbReference type="InterPro" id="IPR018060">
    <property type="entry name" value="HTH_AraC"/>
</dbReference>
<dbReference type="InterPro" id="IPR018062">
    <property type="entry name" value="HTH_AraC-typ_CS"/>
</dbReference>
<dbReference type="PANTHER" id="PTHR11019">
    <property type="entry name" value="HTH-TYPE TRANSCRIPTIONAL REGULATOR NIMR"/>
    <property type="match status" value="1"/>
</dbReference>
<dbReference type="PANTHER" id="PTHR11019:SF199">
    <property type="entry name" value="HTH-TYPE TRANSCRIPTIONAL REGULATOR NIMR"/>
    <property type="match status" value="1"/>
</dbReference>
<dbReference type="Pfam" id="PF12833">
    <property type="entry name" value="HTH_18"/>
    <property type="match status" value="1"/>
</dbReference>
<dbReference type="SMART" id="SM00342">
    <property type="entry name" value="HTH_ARAC"/>
    <property type="match status" value="1"/>
</dbReference>
<dbReference type="SUPFAM" id="SSF46689">
    <property type="entry name" value="Homeodomain-like"/>
    <property type="match status" value="1"/>
</dbReference>
<dbReference type="PROSITE" id="PS00041">
    <property type="entry name" value="HTH_ARAC_FAMILY_1"/>
    <property type="match status" value="1"/>
</dbReference>
<dbReference type="PROSITE" id="PS01124">
    <property type="entry name" value="HTH_ARAC_FAMILY_2"/>
    <property type="match status" value="1"/>
</dbReference>
<reference key="1">
    <citation type="journal article" date="2003" name="Nucleic Acids Res.">
        <title>The complete genome sequence and analysis of Corynebacterium diphtheriae NCTC13129.</title>
        <authorList>
            <person name="Cerdeno-Tarraga A.-M."/>
            <person name="Efstratiou A."/>
            <person name="Dover L.G."/>
            <person name="Holden M.T.G."/>
            <person name="Pallen M.J."/>
            <person name="Bentley S.D."/>
            <person name="Besra G.S."/>
            <person name="Churcher C.M."/>
            <person name="James K.D."/>
            <person name="De Zoysa A."/>
            <person name="Chillingworth T."/>
            <person name="Cronin A."/>
            <person name="Dowd L."/>
            <person name="Feltwell T."/>
            <person name="Hamlin N."/>
            <person name="Holroyd S."/>
            <person name="Jagels K."/>
            <person name="Moule S."/>
            <person name="Quail M.A."/>
            <person name="Rabbinowitsch E."/>
            <person name="Rutherford K.M."/>
            <person name="Thomson N.R."/>
            <person name="Unwin L."/>
            <person name="Whitehead S."/>
            <person name="Barrell B.G."/>
            <person name="Parkhill J."/>
        </authorList>
    </citation>
    <scope>NUCLEOTIDE SEQUENCE [LARGE SCALE GENOMIC DNA]</scope>
    <source>
        <strain>ATCC 700971 / NCTC 13129 / Biotype gravis</strain>
    </source>
</reference>
<sequence>MSLPSIKTTNSYCVVLWCDQGSATINAPDRVVQVMAGDVVLAPHGAFVTGHGVVLPMAFPDFDGGEHTRRLHMGTAWSKRMIFEFSRSLLGETRPSECIAALFDDRARPPRVPEPQAARKVAQKLIAYPADQTPLLEFAQLHNISSRTLQRQFVASTGFTFSEWRAALRVSVAADLLAHDFRIGQVSQMVGFSATSSLTRAFKRHTGDTPSSFTSPRMHAVCEQQPPMIPATTTFARASDDIALWIYSGTATVTTPGYCRFMGAGETVTIPSGTSTRLDVSAGSVALPVPLAAAHDDLTLSDVLAASVNPLAAVELQRLSAQERADVEQVLVPSV</sequence>
<evidence type="ECO:0000250" key="1">
    <source>
        <dbReference type="UniProtKB" id="Q8NRR3"/>
    </source>
</evidence>
<evidence type="ECO:0000255" key="2">
    <source>
        <dbReference type="PROSITE-ProRule" id="PRU00593"/>
    </source>
</evidence>
<name>RIPA_CORDI</name>
<organism>
    <name type="scientific">Corynebacterium diphtheriae (strain ATCC 700971 / NCTC 13129 / Biotype gravis)</name>
    <dbReference type="NCBI Taxonomy" id="257309"/>
    <lineage>
        <taxon>Bacteria</taxon>
        <taxon>Bacillati</taxon>
        <taxon>Actinomycetota</taxon>
        <taxon>Actinomycetes</taxon>
        <taxon>Mycobacteriales</taxon>
        <taxon>Corynebacteriaceae</taxon>
        <taxon>Corynebacterium</taxon>
    </lineage>
</organism>
<comment type="function">
    <text evidence="1">Under iron limitation, represses the acn (aconitase), catA (catechol 1,2 dioxygenase), leuCD (isopropylmalate dehydratase), narKGHJI (nitrite/nitrate transporter and nitrate reductase), sdhCAB (succinate dehydrogenase), pta (phosphotransacetylase) and katA (catalase) genes.</text>
</comment>
<comment type="induction">
    <text evidence="1">Repressed by DtxR under iron excess.</text>
</comment>